<reference key="1">
    <citation type="journal article" date="1998" name="Nature">
        <title>Deciphering the biology of Mycobacterium tuberculosis from the complete genome sequence.</title>
        <authorList>
            <person name="Cole S.T."/>
            <person name="Brosch R."/>
            <person name="Parkhill J."/>
            <person name="Garnier T."/>
            <person name="Churcher C.M."/>
            <person name="Harris D.E."/>
            <person name="Gordon S.V."/>
            <person name="Eiglmeier K."/>
            <person name="Gas S."/>
            <person name="Barry C.E. III"/>
            <person name="Tekaia F."/>
            <person name="Badcock K."/>
            <person name="Basham D."/>
            <person name="Brown D."/>
            <person name="Chillingworth T."/>
            <person name="Connor R."/>
            <person name="Davies R.M."/>
            <person name="Devlin K."/>
            <person name="Feltwell T."/>
            <person name="Gentles S."/>
            <person name="Hamlin N."/>
            <person name="Holroyd S."/>
            <person name="Hornsby T."/>
            <person name="Jagels K."/>
            <person name="Krogh A."/>
            <person name="McLean J."/>
            <person name="Moule S."/>
            <person name="Murphy L.D."/>
            <person name="Oliver S."/>
            <person name="Osborne J."/>
            <person name="Quail M.A."/>
            <person name="Rajandream M.A."/>
            <person name="Rogers J."/>
            <person name="Rutter S."/>
            <person name="Seeger K."/>
            <person name="Skelton S."/>
            <person name="Squares S."/>
            <person name="Squares R."/>
            <person name="Sulston J.E."/>
            <person name="Taylor K."/>
            <person name="Whitehead S."/>
            <person name="Barrell B.G."/>
        </authorList>
    </citation>
    <scope>NUCLEOTIDE SEQUENCE [LARGE SCALE GENOMIC DNA]</scope>
    <source>
        <strain>ATCC 25618 / H37Rv</strain>
    </source>
</reference>
<reference key="2">
    <citation type="journal article" date="2011" name="Mol. Cell. Proteomics">
        <title>Proteogenomic analysis of Mycobacterium tuberculosis by high resolution mass spectrometry.</title>
        <authorList>
            <person name="Kelkar D.S."/>
            <person name="Kumar D."/>
            <person name="Kumar P."/>
            <person name="Balakrishnan L."/>
            <person name="Muthusamy B."/>
            <person name="Yadav A.K."/>
            <person name="Shrivastava P."/>
            <person name="Marimuthu A."/>
            <person name="Anand S."/>
            <person name="Sundaram H."/>
            <person name="Kingsbury R."/>
            <person name="Harsha H.C."/>
            <person name="Nair B."/>
            <person name="Prasad T.S."/>
            <person name="Chauhan D.S."/>
            <person name="Katoch K."/>
            <person name="Katoch V.M."/>
            <person name="Kumar P."/>
            <person name="Chaerkady R."/>
            <person name="Ramachandran S."/>
            <person name="Dash D."/>
            <person name="Pandey A."/>
        </authorList>
    </citation>
    <scope>IDENTIFICATION BY MASS SPECTROMETRY [LARGE SCALE ANALYSIS]</scope>
    <source>
        <strain>ATCC 25618 / H37Rv</strain>
    </source>
</reference>
<gene>
    <name evidence="1" type="primary">rplU</name>
    <name type="ordered locus">Rv2442c</name>
    <name type="ORF">MTCY428.04</name>
</gene>
<proteinExistence type="evidence at protein level"/>
<protein>
    <recommendedName>
        <fullName evidence="1">Large ribosomal subunit protein bL21</fullName>
    </recommendedName>
    <alternativeName>
        <fullName evidence="2">50S ribosomal protein L21</fullName>
    </alternativeName>
</protein>
<sequence>MATYAIVKTGGKQYKVAVGDVVKVEKLESEQGEKVSLPVALVVDGATVTTDAKALAKVAVTGEVLGHTKGPKIRIHKFKNKTGYHKRQGHRQQLTVLKVTGIA</sequence>
<keyword id="KW-0002">3D-structure</keyword>
<keyword id="KW-1185">Reference proteome</keyword>
<keyword id="KW-0687">Ribonucleoprotein</keyword>
<keyword id="KW-0689">Ribosomal protein</keyword>
<keyword id="KW-0694">RNA-binding</keyword>
<keyword id="KW-0699">rRNA-binding</keyword>
<organism>
    <name type="scientific">Mycobacterium tuberculosis (strain ATCC 25618 / H37Rv)</name>
    <dbReference type="NCBI Taxonomy" id="83332"/>
    <lineage>
        <taxon>Bacteria</taxon>
        <taxon>Bacillati</taxon>
        <taxon>Actinomycetota</taxon>
        <taxon>Actinomycetes</taxon>
        <taxon>Mycobacteriales</taxon>
        <taxon>Mycobacteriaceae</taxon>
        <taxon>Mycobacterium</taxon>
        <taxon>Mycobacterium tuberculosis complex</taxon>
    </lineage>
</organism>
<accession>P9WHC3</accession>
<accession>L0T9M8</accession>
<accession>P66117</accession>
<accession>P71907</accession>
<comment type="function">
    <text evidence="1">This protein binds to 23S rRNA in the presence of protein L20.</text>
</comment>
<comment type="subunit">
    <text evidence="1">Part of the 50S ribosomal subunit. Contacts protein L20.</text>
</comment>
<comment type="similarity">
    <text evidence="1">Belongs to the bacterial ribosomal protein bL21 family.</text>
</comment>
<comment type="sequence caution" evidence="2">
    <conflict type="erroneous initiation">
        <sequence resource="EMBL-CDS" id="CCP45235"/>
    </conflict>
    <text>Extended N-terminus.</text>
</comment>
<dbReference type="EMBL" id="AL123456">
    <property type="protein sequence ID" value="CCP45235.1"/>
    <property type="status" value="ALT_INIT"/>
    <property type="molecule type" value="Genomic_DNA"/>
</dbReference>
<dbReference type="PIR" id="H70680">
    <property type="entry name" value="H70680"/>
</dbReference>
<dbReference type="RefSeq" id="NP_216958.1">
    <property type="nucleotide sequence ID" value="NC_000962.3"/>
</dbReference>
<dbReference type="PDB" id="5V7Q">
    <property type="method" value="EM"/>
    <property type="resolution" value="3.70 A"/>
    <property type="chains" value="R=1-103"/>
</dbReference>
<dbReference type="PDB" id="5V93">
    <property type="method" value="EM"/>
    <property type="resolution" value="4.00 A"/>
    <property type="chains" value="R=1-103"/>
</dbReference>
<dbReference type="PDB" id="7F0D">
    <property type="method" value="EM"/>
    <property type="resolution" value="3.30 A"/>
    <property type="chains" value="R=1-103"/>
</dbReference>
<dbReference type="PDB" id="7KGB">
    <property type="method" value="EM"/>
    <property type="resolution" value="2.70 A"/>
    <property type="chains" value="R=1-103"/>
</dbReference>
<dbReference type="PDB" id="7MSC">
    <property type="method" value="EM"/>
    <property type="resolution" value="2.97 A"/>
    <property type="chains" value="R=1-103"/>
</dbReference>
<dbReference type="PDB" id="7MSH">
    <property type="method" value="EM"/>
    <property type="resolution" value="3.23 A"/>
    <property type="chains" value="R=1-103"/>
</dbReference>
<dbReference type="PDB" id="7MSM">
    <property type="method" value="EM"/>
    <property type="resolution" value="2.79 A"/>
    <property type="chains" value="R=1-103"/>
</dbReference>
<dbReference type="PDB" id="7MSZ">
    <property type="method" value="EM"/>
    <property type="resolution" value="3.10 A"/>
    <property type="chains" value="R=1-103"/>
</dbReference>
<dbReference type="PDB" id="7MT2">
    <property type="method" value="EM"/>
    <property type="resolution" value="2.76 A"/>
    <property type="chains" value="R=1-103"/>
</dbReference>
<dbReference type="PDB" id="7MT3">
    <property type="method" value="EM"/>
    <property type="resolution" value="2.80 A"/>
    <property type="chains" value="R=1-103"/>
</dbReference>
<dbReference type="PDB" id="7MT7">
    <property type="method" value="EM"/>
    <property type="resolution" value="2.71 A"/>
    <property type="chains" value="R=1-103"/>
</dbReference>
<dbReference type="PDB" id="7SFR">
    <property type="method" value="EM"/>
    <property type="resolution" value="2.60 A"/>
    <property type="chains" value="R=1-103"/>
</dbReference>
<dbReference type="PDBsum" id="5V7Q"/>
<dbReference type="PDBsum" id="5V93"/>
<dbReference type="PDBsum" id="7F0D"/>
<dbReference type="PDBsum" id="7KGB"/>
<dbReference type="PDBsum" id="7MSC"/>
<dbReference type="PDBsum" id="7MSH"/>
<dbReference type="PDBsum" id="7MSM"/>
<dbReference type="PDBsum" id="7MSZ"/>
<dbReference type="PDBsum" id="7MT2"/>
<dbReference type="PDBsum" id="7MT3"/>
<dbReference type="PDBsum" id="7MT7"/>
<dbReference type="PDBsum" id="7SFR"/>
<dbReference type="EMDB" id="EMD-22865"/>
<dbReference type="EMDB" id="EMD-23961"/>
<dbReference type="EMDB" id="EMD-23962"/>
<dbReference type="EMDB" id="EMD-23969"/>
<dbReference type="EMDB" id="EMD-23972"/>
<dbReference type="EMDB" id="EMD-23974"/>
<dbReference type="EMDB" id="EMD-23975"/>
<dbReference type="EMDB" id="EMD-23976"/>
<dbReference type="EMDB" id="EMD-31398"/>
<dbReference type="SMR" id="P9WHC3"/>
<dbReference type="FunCoup" id="P9WHC3">
    <property type="interactions" value="100"/>
</dbReference>
<dbReference type="STRING" id="83332.Rv2442c"/>
<dbReference type="PaxDb" id="83332-Rv2442c"/>
<dbReference type="GeneID" id="885715"/>
<dbReference type="KEGG" id="mtu:Rv2442c"/>
<dbReference type="PATRIC" id="fig|83332.12.peg.2738"/>
<dbReference type="TubercuList" id="Rv2442c"/>
<dbReference type="eggNOG" id="COG0261">
    <property type="taxonomic scope" value="Bacteria"/>
</dbReference>
<dbReference type="InParanoid" id="P9WHC3"/>
<dbReference type="OrthoDB" id="9813334at2"/>
<dbReference type="PRO" id="PR:P9WHC3"/>
<dbReference type="Proteomes" id="UP000001584">
    <property type="component" value="Chromosome"/>
</dbReference>
<dbReference type="GO" id="GO:0005737">
    <property type="term" value="C:cytoplasm"/>
    <property type="evidence" value="ECO:0007669"/>
    <property type="project" value="UniProtKB-ARBA"/>
</dbReference>
<dbReference type="GO" id="GO:0005886">
    <property type="term" value="C:plasma membrane"/>
    <property type="evidence" value="ECO:0007005"/>
    <property type="project" value="MTBBASE"/>
</dbReference>
<dbReference type="GO" id="GO:1990904">
    <property type="term" value="C:ribonucleoprotein complex"/>
    <property type="evidence" value="ECO:0007669"/>
    <property type="project" value="UniProtKB-KW"/>
</dbReference>
<dbReference type="GO" id="GO:0005840">
    <property type="term" value="C:ribosome"/>
    <property type="evidence" value="ECO:0007669"/>
    <property type="project" value="UniProtKB-KW"/>
</dbReference>
<dbReference type="GO" id="GO:0019843">
    <property type="term" value="F:rRNA binding"/>
    <property type="evidence" value="ECO:0007669"/>
    <property type="project" value="UniProtKB-UniRule"/>
</dbReference>
<dbReference type="GO" id="GO:0003735">
    <property type="term" value="F:structural constituent of ribosome"/>
    <property type="evidence" value="ECO:0000318"/>
    <property type="project" value="GO_Central"/>
</dbReference>
<dbReference type="GO" id="GO:0006412">
    <property type="term" value="P:translation"/>
    <property type="evidence" value="ECO:0007669"/>
    <property type="project" value="UniProtKB-UniRule"/>
</dbReference>
<dbReference type="HAMAP" id="MF_01363">
    <property type="entry name" value="Ribosomal_bL21"/>
    <property type="match status" value="1"/>
</dbReference>
<dbReference type="InterPro" id="IPR028909">
    <property type="entry name" value="bL21-like"/>
</dbReference>
<dbReference type="InterPro" id="IPR036164">
    <property type="entry name" value="bL21-like_sf"/>
</dbReference>
<dbReference type="InterPro" id="IPR001787">
    <property type="entry name" value="Ribosomal_bL21"/>
</dbReference>
<dbReference type="InterPro" id="IPR018258">
    <property type="entry name" value="Ribosomal_bL21_CS"/>
</dbReference>
<dbReference type="NCBIfam" id="TIGR00061">
    <property type="entry name" value="L21"/>
    <property type="match status" value="1"/>
</dbReference>
<dbReference type="PANTHER" id="PTHR21349">
    <property type="entry name" value="50S RIBOSOMAL PROTEIN L21"/>
    <property type="match status" value="1"/>
</dbReference>
<dbReference type="PANTHER" id="PTHR21349:SF0">
    <property type="entry name" value="LARGE RIBOSOMAL SUBUNIT PROTEIN BL21M"/>
    <property type="match status" value="1"/>
</dbReference>
<dbReference type="Pfam" id="PF00829">
    <property type="entry name" value="Ribosomal_L21p"/>
    <property type="match status" value="1"/>
</dbReference>
<dbReference type="SUPFAM" id="SSF141091">
    <property type="entry name" value="L21p-like"/>
    <property type="match status" value="1"/>
</dbReference>
<dbReference type="PROSITE" id="PS01169">
    <property type="entry name" value="RIBOSOMAL_L21"/>
    <property type="match status" value="1"/>
</dbReference>
<evidence type="ECO:0000255" key="1">
    <source>
        <dbReference type="HAMAP-Rule" id="MF_01363"/>
    </source>
</evidence>
<evidence type="ECO:0000305" key="2"/>
<evidence type="ECO:0007829" key="3">
    <source>
        <dbReference type="PDB" id="7F0D"/>
    </source>
</evidence>
<name>RL21_MYCTU</name>
<feature type="chain" id="PRO_0000181010" description="Large ribosomal subunit protein bL21">
    <location>
        <begin position="1"/>
        <end position="103"/>
    </location>
</feature>
<feature type="strand" evidence="3">
    <location>
        <begin position="5"/>
        <end position="9"/>
    </location>
</feature>
<feature type="strand" evidence="3">
    <location>
        <begin position="12"/>
        <end position="16"/>
    </location>
</feature>
<feature type="strand" evidence="3">
    <location>
        <begin position="22"/>
        <end position="24"/>
    </location>
</feature>
<feature type="strand" evidence="3">
    <location>
        <begin position="31"/>
        <end position="43"/>
    </location>
</feature>
<feature type="helix" evidence="3">
    <location>
        <begin position="52"/>
        <end position="55"/>
    </location>
</feature>
<feature type="strand" evidence="3">
    <location>
        <begin position="59"/>
        <end position="65"/>
    </location>
</feature>
<feature type="strand" evidence="3">
    <location>
        <begin position="75"/>
        <end position="78"/>
    </location>
</feature>
<feature type="turn" evidence="3">
    <location>
        <begin position="81"/>
        <end position="83"/>
    </location>
</feature>
<feature type="strand" evidence="3">
    <location>
        <begin position="85"/>
        <end position="88"/>
    </location>
</feature>
<feature type="strand" evidence="3">
    <location>
        <begin position="95"/>
        <end position="97"/>
    </location>
</feature>